<keyword id="KW-0030">Aminoacyl-tRNA synthetase</keyword>
<keyword id="KW-0067">ATP-binding</keyword>
<keyword id="KW-0963">Cytoplasm</keyword>
<keyword id="KW-0436">Ligase</keyword>
<keyword id="KW-0460">Magnesium</keyword>
<keyword id="KW-0479">Metal-binding</keyword>
<keyword id="KW-0547">Nucleotide-binding</keyword>
<keyword id="KW-0648">Protein biosynthesis</keyword>
<keyword id="KW-1185">Reference proteome</keyword>
<name>SYFA_CROS8</name>
<reference key="1">
    <citation type="journal article" date="2010" name="PLoS ONE">
        <title>Genome sequence of Cronobacter sakazakii BAA-894 and comparative genomic hybridization analysis with other Cronobacter species.</title>
        <authorList>
            <person name="Kucerova E."/>
            <person name="Clifton S.W."/>
            <person name="Xia X.Q."/>
            <person name="Long F."/>
            <person name="Porwollik S."/>
            <person name="Fulton L."/>
            <person name="Fronick C."/>
            <person name="Minx P."/>
            <person name="Kyung K."/>
            <person name="Warren W."/>
            <person name="Fulton R."/>
            <person name="Feng D."/>
            <person name="Wollam A."/>
            <person name="Shah N."/>
            <person name="Bhonagiri V."/>
            <person name="Nash W.E."/>
            <person name="Hallsworth-Pepin K."/>
            <person name="Wilson R.K."/>
            <person name="McClelland M."/>
            <person name="Forsythe S.J."/>
        </authorList>
    </citation>
    <scope>NUCLEOTIDE SEQUENCE [LARGE SCALE GENOMIC DNA]</scope>
    <source>
        <strain>ATCC BAA-894</strain>
    </source>
</reference>
<accession>A7MNY9</accession>
<proteinExistence type="inferred from homology"/>
<evidence type="ECO:0000255" key="1">
    <source>
        <dbReference type="HAMAP-Rule" id="MF_00281"/>
    </source>
</evidence>
<feature type="chain" id="PRO_1000006827" description="Phenylalanine--tRNA ligase alpha subunit">
    <location>
        <begin position="1"/>
        <end position="327"/>
    </location>
</feature>
<feature type="binding site" evidence="1">
    <location>
        <position position="252"/>
    </location>
    <ligand>
        <name>Mg(2+)</name>
        <dbReference type="ChEBI" id="CHEBI:18420"/>
        <note>shared with beta subunit</note>
    </ligand>
</feature>
<gene>
    <name evidence="1" type="primary">pheS</name>
    <name type="ordered locus">ESA_02116</name>
</gene>
<dbReference type="EC" id="6.1.1.20" evidence="1"/>
<dbReference type="EMBL" id="CP000783">
    <property type="protein sequence ID" value="ABU77365.1"/>
    <property type="molecule type" value="Genomic_DNA"/>
</dbReference>
<dbReference type="RefSeq" id="WP_007867262.1">
    <property type="nucleotide sequence ID" value="NC_009778.1"/>
</dbReference>
<dbReference type="SMR" id="A7MNY9"/>
<dbReference type="GeneID" id="56730880"/>
<dbReference type="KEGG" id="esa:ESA_02116"/>
<dbReference type="HOGENOM" id="CLU_025086_0_1_6"/>
<dbReference type="Proteomes" id="UP000000260">
    <property type="component" value="Chromosome"/>
</dbReference>
<dbReference type="GO" id="GO:0005737">
    <property type="term" value="C:cytoplasm"/>
    <property type="evidence" value="ECO:0007669"/>
    <property type="project" value="UniProtKB-SubCell"/>
</dbReference>
<dbReference type="GO" id="GO:0005524">
    <property type="term" value="F:ATP binding"/>
    <property type="evidence" value="ECO:0007669"/>
    <property type="project" value="UniProtKB-UniRule"/>
</dbReference>
<dbReference type="GO" id="GO:0000287">
    <property type="term" value="F:magnesium ion binding"/>
    <property type="evidence" value="ECO:0007669"/>
    <property type="project" value="UniProtKB-UniRule"/>
</dbReference>
<dbReference type="GO" id="GO:0004826">
    <property type="term" value="F:phenylalanine-tRNA ligase activity"/>
    <property type="evidence" value="ECO:0007669"/>
    <property type="project" value="UniProtKB-UniRule"/>
</dbReference>
<dbReference type="GO" id="GO:0000049">
    <property type="term" value="F:tRNA binding"/>
    <property type="evidence" value="ECO:0007669"/>
    <property type="project" value="InterPro"/>
</dbReference>
<dbReference type="GO" id="GO:0006432">
    <property type="term" value="P:phenylalanyl-tRNA aminoacylation"/>
    <property type="evidence" value="ECO:0007669"/>
    <property type="project" value="UniProtKB-UniRule"/>
</dbReference>
<dbReference type="CDD" id="cd00496">
    <property type="entry name" value="PheRS_alpha_core"/>
    <property type="match status" value="1"/>
</dbReference>
<dbReference type="FunFam" id="3.30.930.10:FF:000003">
    <property type="entry name" value="Phenylalanine--tRNA ligase alpha subunit"/>
    <property type="match status" value="1"/>
</dbReference>
<dbReference type="Gene3D" id="3.30.930.10">
    <property type="entry name" value="Bira Bifunctional Protein, Domain 2"/>
    <property type="match status" value="1"/>
</dbReference>
<dbReference type="HAMAP" id="MF_00281">
    <property type="entry name" value="Phe_tRNA_synth_alpha1"/>
    <property type="match status" value="1"/>
</dbReference>
<dbReference type="InterPro" id="IPR006195">
    <property type="entry name" value="aa-tRNA-synth_II"/>
</dbReference>
<dbReference type="InterPro" id="IPR045864">
    <property type="entry name" value="aa-tRNA-synth_II/BPL/LPL"/>
</dbReference>
<dbReference type="InterPro" id="IPR004529">
    <property type="entry name" value="Phe-tRNA-synth_IIc_asu"/>
</dbReference>
<dbReference type="InterPro" id="IPR004188">
    <property type="entry name" value="Phe-tRNA_ligase_II_N"/>
</dbReference>
<dbReference type="InterPro" id="IPR022911">
    <property type="entry name" value="Phe_tRNA_ligase_alpha1_bac"/>
</dbReference>
<dbReference type="InterPro" id="IPR002319">
    <property type="entry name" value="Phenylalanyl-tRNA_Synthase"/>
</dbReference>
<dbReference type="InterPro" id="IPR010978">
    <property type="entry name" value="tRNA-bd_arm"/>
</dbReference>
<dbReference type="NCBIfam" id="TIGR00468">
    <property type="entry name" value="pheS"/>
    <property type="match status" value="1"/>
</dbReference>
<dbReference type="PANTHER" id="PTHR11538:SF41">
    <property type="entry name" value="PHENYLALANINE--TRNA LIGASE, MITOCHONDRIAL"/>
    <property type="match status" value="1"/>
</dbReference>
<dbReference type="PANTHER" id="PTHR11538">
    <property type="entry name" value="PHENYLALANYL-TRNA SYNTHETASE"/>
    <property type="match status" value="1"/>
</dbReference>
<dbReference type="Pfam" id="PF02912">
    <property type="entry name" value="Phe_tRNA-synt_N"/>
    <property type="match status" value="1"/>
</dbReference>
<dbReference type="Pfam" id="PF01409">
    <property type="entry name" value="tRNA-synt_2d"/>
    <property type="match status" value="1"/>
</dbReference>
<dbReference type="SUPFAM" id="SSF55681">
    <property type="entry name" value="Class II aaRS and biotin synthetases"/>
    <property type="match status" value="1"/>
</dbReference>
<dbReference type="SUPFAM" id="SSF46589">
    <property type="entry name" value="tRNA-binding arm"/>
    <property type="match status" value="1"/>
</dbReference>
<dbReference type="PROSITE" id="PS50862">
    <property type="entry name" value="AA_TRNA_LIGASE_II"/>
    <property type="match status" value="1"/>
</dbReference>
<organism>
    <name type="scientific">Cronobacter sakazakii (strain ATCC BAA-894)</name>
    <name type="common">Enterobacter sakazakii</name>
    <dbReference type="NCBI Taxonomy" id="290339"/>
    <lineage>
        <taxon>Bacteria</taxon>
        <taxon>Pseudomonadati</taxon>
        <taxon>Pseudomonadota</taxon>
        <taxon>Gammaproteobacteria</taxon>
        <taxon>Enterobacterales</taxon>
        <taxon>Enterobacteriaceae</taxon>
        <taxon>Cronobacter</taxon>
    </lineage>
</organism>
<protein>
    <recommendedName>
        <fullName evidence="1">Phenylalanine--tRNA ligase alpha subunit</fullName>
        <ecNumber evidence="1">6.1.1.20</ecNumber>
    </recommendedName>
    <alternativeName>
        <fullName evidence="1">Phenylalanyl-tRNA synthetase alpha subunit</fullName>
        <shortName evidence="1">PheRS</shortName>
    </alternativeName>
</protein>
<sequence>MPHLADLVASAKAAITSAQDVAALDNVRVEYLGKKGHLTLQMTTLRELPPEERPAAGAVINEAKEQVQQALNARKNELESAALNARLAAETIDVSLPGRRVENGGLHPVTRTIDRIESFFGELGFTVATGPEIEDDYHNFDALNIPGHHPARADHDTFWFDATRLLRTQTSGVQIRTMKNQQPPIRIIAPGRVYRNDYDQTHTPMFHQMEGLIVDKNISFTNLKGTLHDFLRNFFEEDLQIRFRPSYFPFTEPSAEVDVMGKNGKWLEVLGCGMVHPNVLRNVGIDPEVYSGFAFGMGMERLTMLRYGVTDLRAFFENDLRFLKQFK</sequence>
<comment type="catalytic activity">
    <reaction evidence="1">
        <text>tRNA(Phe) + L-phenylalanine + ATP = L-phenylalanyl-tRNA(Phe) + AMP + diphosphate + H(+)</text>
        <dbReference type="Rhea" id="RHEA:19413"/>
        <dbReference type="Rhea" id="RHEA-COMP:9668"/>
        <dbReference type="Rhea" id="RHEA-COMP:9699"/>
        <dbReference type="ChEBI" id="CHEBI:15378"/>
        <dbReference type="ChEBI" id="CHEBI:30616"/>
        <dbReference type="ChEBI" id="CHEBI:33019"/>
        <dbReference type="ChEBI" id="CHEBI:58095"/>
        <dbReference type="ChEBI" id="CHEBI:78442"/>
        <dbReference type="ChEBI" id="CHEBI:78531"/>
        <dbReference type="ChEBI" id="CHEBI:456215"/>
        <dbReference type="EC" id="6.1.1.20"/>
    </reaction>
</comment>
<comment type="cofactor">
    <cofactor evidence="1">
        <name>Mg(2+)</name>
        <dbReference type="ChEBI" id="CHEBI:18420"/>
    </cofactor>
    <text evidence="1">Binds 2 magnesium ions per tetramer.</text>
</comment>
<comment type="subunit">
    <text evidence="1">Tetramer of two alpha and two beta subunits.</text>
</comment>
<comment type="subcellular location">
    <subcellularLocation>
        <location evidence="1">Cytoplasm</location>
    </subcellularLocation>
</comment>
<comment type="similarity">
    <text evidence="1">Belongs to the class-II aminoacyl-tRNA synthetase family. Phe-tRNA synthetase alpha subunit type 1 subfamily.</text>
</comment>